<accession>P51768</accession>
<comment type="function">
    <text evidence="3">Baseplate protein that is part of the outer wedges of the baseplate. Probably plays a role as a connector between the central and peripheral parts of the baseplate. Plays a role in tail assembly.</text>
</comment>
<comment type="subcellular location">
    <subcellularLocation>
        <location evidence="1">Virion</location>
    </subcellularLocation>
</comment>
<comment type="induction">
    <text evidence="2">Expressed in the late phase of the viral replicative cycle.</text>
</comment>
<comment type="similarity">
    <text evidence="2">Belongs to the GpW/Gp25 family.</text>
</comment>
<name>BPW_BPP2</name>
<proteinExistence type="inferred from homology"/>
<organism>
    <name type="scientific">Escherichia phage P2</name>
    <name type="common">Bacteriophage P2</name>
    <dbReference type="NCBI Taxonomy" id="2905681"/>
    <lineage>
        <taxon>Viruses</taxon>
        <taxon>Duplodnaviria</taxon>
        <taxon>Heunggongvirae</taxon>
        <taxon>Uroviricota</taxon>
        <taxon>Caudoviricetes</taxon>
        <taxon>Peduoviridae</taxon>
        <taxon>Peduovirus</taxon>
        <taxon>Peduovirus P2</taxon>
    </lineage>
</organism>
<feature type="chain" id="PRO_0000165264" description="Baseplate protein W">
    <location>
        <begin position="1"/>
        <end position="115"/>
    </location>
</feature>
<protein>
    <recommendedName>
        <fullName evidence="2">Baseplate protein W</fullName>
    </recommendedName>
    <alternativeName>
        <fullName evidence="2">Gene W protein</fullName>
    </alternativeName>
    <alternativeName>
        <fullName>GpW</fullName>
    </alternativeName>
</protein>
<organismHost>
    <name type="scientific">Enterobacteriaceae</name>
    <dbReference type="NCBI Taxonomy" id="543"/>
</organismHost>
<gene>
    <name type="primary">W</name>
</gene>
<evidence type="ECO:0000269" key="1">
    <source>
    </source>
</evidence>
<evidence type="ECO:0000305" key="2"/>
<evidence type="ECO:0000305" key="3">
    <source>
    </source>
</evidence>
<reference key="1">
    <citation type="journal article" date="1995" name="Virology">
        <title>Bacteriophage P2: genes involved in baseplate assembly.</title>
        <authorList>
            <person name="Haggaard-Ljungquist E."/>
            <person name="Jacobsen E."/>
            <person name="Rishovd S."/>
            <person name="Six E.W."/>
            <person name="Nilssen O."/>
            <person name="Sunshine M.G."/>
            <person name="Lindqvist B.H."/>
            <person name="Kim K.-J."/>
            <person name="Barreiro V."/>
            <person name="Koonin E.V."/>
            <person name="Calendar R."/>
        </authorList>
    </citation>
    <scope>NUCLEOTIDE SEQUENCE [GENOMIC DNA]</scope>
</reference>
<reference key="2">
    <citation type="journal article" date="2013" name="J. Bacteriol.">
        <title>Structural and functional studies of gpX of Escherichia coli phage P2 reveal a widespread role for LysM domains in the baseplates of contractile-tailed phages.</title>
        <authorList>
            <person name="Maxwell K.L."/>
            <person name="Fatehi Hassanabad M."/>
            <person name="Chang T."/>
            <person name="Pirani N."/>
            <person name="Bona D."/>
            <person name="Edwards A.M."/>
            <person name="Davidson A.R."/>
        </authorList>
    </citation>
    <scope>FUNCTION</scope>
    <scope>SUBCELLULAR LOCATION</scope>
</reference>
<sequence>MTARYLGMNRSDGLTVTDLEHISQSIGDILRTPVGSRVMRRDYGSLLASMIDQPQTPALELQIKVACYMAVLKWEPRVTLSSVTTARSFDGRMTVTLTGQHNDTGQPLSLTIPVS</sequence>
<keyword id="KW-0426">Late protein</keyword>
<keyword id="KW-1185">Reference proteome</keyword>
<keyword id="KW-1226">Viral baseplate protein</keyword>
<keyword id="KW-1188">Viral release from host cell</keyword>
<keyword id="KW-1245">Viral tail assembly</keyword>
<keyword id="KW-1227">Viral tail protein</keyword>
<keyword id="KW-0946">Virion</keyword>
<dbReference type="EMBL" id="AF063097">
    <property type="protein sequence ID" value="AAD03283.1"/>
    <property type="molecule type" value="Genomic_DNA"/>
</dbReference>
<dbReference type="RefSeq" id="NP_046772.1">
    <property type="nucleotide sequence ID" value="NC_001895.1"/>
</dbReference>
<dbReference type="SMR" id="P51768"/>
<dbReference type="GeneID" id="77440807"/>
<dbReference type="KEGG" id="vg:77440807"/>
<dbReference type="Proteomes" id="UP000009092">
    <property type="component" value="Genome"/>
</dbReference>
<dbReference type="GO" id="GO:0098025">
    <property type="term" value="C:virus tail, baseplate"/>
    <property type="evidence" value="ECO:0000314"/>
    <property type="project" value="CACAO"/>
</dbReference>
<dbReference type="GO" id="GO:0098003">
    <property type="term" value="P:viral tail assembly"/>
    <property type="evidence" value="ECO:0007669"/>
    <property type="project" value="UniProtKB-KW"/>
</dbReference>
<dbReference type="Gene3D" id="3.10.450.40">
    <property type="match status" value="1"/>
</dbReference>
<dbReference type="InterPro" id="IPR007048">
    <property type="entry name" value="IraD/Gp25-like"/>
</dbReference>
<dbReference type="Pfam" id="PF04965">
    <property type="entry name" value="GPW_gp25"/>
    <property type="match status" value="1"/>
</dbReference>
<dbReference type="SUPFAM" id="SSF160719">
    <property type="entry name" value="gpW/gp25-like"/>
    <property type="match status" value="1"/>
</dbReference>